<name>EX7L_SALAR</name>
<evidence type="ECO:0000255" key="1">
    <source>
        <dbReference type="HAMAP-Rule" id="MF_00378"/>
    </source>
</evidence>
<evidence type="ECO:0000256" key="2">
    <source>
        <dbReference type="SAM" id="MobiDB-lite"/>
    </source>
</evidence>
<gene>
    <name evidence="1" type="primary">xseA</name>
    <name type="ordered locus">SARI_00364</name>
</gene>
<protein>
    <recommendedName>
        <fullName evidence="1">Exodeoxyribonuclease 7 large subunit</fullName>
        <ecNumber evidence="1">3.1.11.6</ecNumber>
    </recommendedName>
    <alternativeName>
        <fullName evidence="1">Exodeoxyribonuclease VII large subunit</fullName>
        <shortName evidence="1">Exonuclease VII large subunit</shortName>
    </alternativeName>
</protein>
<dbReference type="EC" id="3.1.11.6" evidence="1"/>
<dbReference type="EMBL" id="CP000880">
    <property type="protein sequence ID" value="ABX20301.1"/>
    <property type="molecule type" value="Genomic_DNA"/>
</dbReference>
<dbReference type="SMR" id="A9MHM3"/>
<dbReference type="STRING" id="41514.SARI_00364"/>
<dbReference type="KEGG" id="ses:SARI_00364"/>
<dbReference type="HOGENOM" id="CLU_023625_3_1_6"/>
<dbReference type="Proteomes" id="UP000002084">
    <property type="component" value="Chromosome"/>
</dbReference>
<dbReference type="GO" id="GO:0005737">
    <property type="term" value="C:cytoplasm"/>
    <property type="evidence" value="ECO:0007669"/>
    <property type="project" value="UniProtKB-SubCell"/>
</dbReference>
<dbReference type="GO" id="GO:0009318">
    <property type="term" value="C:exodeoxyribonuclease VII complex"/>
    <property type="evidence" value="ECO:0007669"/>
    <property type="project" value="InterPro"/>
</dbReference>
<dbReference type="GO" id="GO:0008855">
    <property type="term" value="F:exodeoxyribonuclease VII activity"/>
    <property type="evidence" value="ECO:0007669"/>
    <property type="project" value="UniProtKB-UniRule"/>
</dbReference>
<dbReference type="GO" id="GO:0003676">
    <property type="term" value="F:nucleic acid binding"/>
    <property type="evidence" value="ECO:0007669"/>
    <property type="project" value="InterPro"/>
</dbReference>
<dbReference type="GO" id="GO:0006308">
    <property type="term" value="P:DNA catabolic process"/>
    <property type="evidence" value="ECO:0007669"/>
    <property type="project" value="UniProtKB-UniRule"/>
</dbReference>
<dbReference type="CDD" id="cd04489">
    <property type="entry name" value="ExoVII_LU_OBF"/>
    <property type="match status" value="1"/>
</dbReference>
<dbReference type="HAMAP" id="MF_00378">
    <property type="entry name" value="Exonuc_7_L"/>
    <property type="match status" value="1"/>
</dbReference>
<dbReference type="InterPro" id="IPR003753">
    <property type="entry name" value="Exonuc_VII_L"/>
</dbReference>
<dbReference type="InterPro" id="IPR020579">
    <property type="entry name" value="Exonuc_VII_lsu_C"/>
</dbReference>
<dbReference type="InterPro" id="IPR025824">
    <property type="entry name" value="OB-fold_nuc-bd_dom"/>
</dbReference>
<dbReference type="NCBIfam" id="TIGR00237">
    <property type="entry name" value="xseA"/>
    <property type="match status" value="1"/>
</dbReference>
<dbReference type="PANTHER" id="PTHR30008">
    <property type="entry name" value="EXODEOXYRIBONUCLEASE 7 LARGE SUBUNIT"/>
    <property type="match status" value="1"/>
</dbReference>
<dbReference type="PANTHER" id="PTHR30008:SF0">
    <property type="entry name" value="EXODEOXYRIBONUCLEASE 7 LARGE SUBUNIT"/>
    <property type="match status" value="1"/>
</dbReference>
<dbReference type="Pfam" id="PF02601">
    <property type="entry name" value="Exonuc_VII_L"/>
    <property type="match status" value="1"/>
</dbReference>
<dbReference type="Pfam" id="PF13742">
    <property type="entry name" value="tRNA_anti_2"/>
    <property type="match status" value="1"/>
</dbReference>
<accession>A9MHM3</accession>
<sequence>MLSSQTSSIFTVSRLNQTVRLLLEQEMGQVWISGEISNFTQPASGHWYFTLKDDTAQVRCAMFRNSNRRVTFRPQHGQQVLVRANITLYEPRGDYQIIVESMQPAGEGLLQQKYEQLKAKLQAEGLFDQQYKHPLPSPAYCVGVITSKTGAALHDILHVLKRRDPSLPVIIYPAAVQGEDAPGQIVRAITLANARKECDVLIVGRGGGSLEDLWSFNDERVARAIFASTIPVVSAVGHETDVTIADFVADLRAPTPSAAAEVVSRNQQELLRQMQTACQRLEMAMDYYLANRQRRFSQLYHRLQQQHPQLRLARQQTTLERLRQRMHLALENQLKQANQRQQRASQRLRQQNPQPRIHRAQSRIQQLEYRLAENFRARLSEQRERFGNTVTHLEAVSPLATLARGYSVSTATDGNVLKKVKQLKVGDMMTTRLKDGWVTSEVTAIKPVKKIRLG</sequence>
<comment type="function">
    <text evidence="1">Bidirectionally degrades single-stranded DNA into large acid-insoluble oligonucleotides, which are then degraded further into small acid-soluble oligonucleotides.</text>
</comment>
<comment type="catalytic activity">
    <reaction evidence="1">
        <text>Exonucleolytic cleavage in either 5'- to 3'- or 3'- to 5'-direction to yield nucleoside 5'-phosphates.</text>
        <dbReference type="EC" id="3.1.11.6"/>
    </reaction>
</comment>
<comment type="subunit">
    <text evidence="1">Heterooligomer composed of large and small subunits.</text>
</comment>
<comment type="subcellular location">
    <subcellularLocation>
        <location evidence="1">Cytoplasm</location>
    </subcellularLocation>
</comment>
<comment type="similarity">
    <text evidence="1">Belongs to the XseA family.</text>
</comment>
<feature type="chain" id="PRO_1000079989" description="Exodeoxyribonuclease 7 large subunit">
    <location>
        <begin position="1"/>
        <end position="454"/>
    </location>
</feature>
<feature type="region of interest" description="Disordered" evidence="2">
    <location>
        <begin position="337"/>
        <end position="359"/>
    </location>
</feature>
<feature type="compositionally biased region" description="Low complexity" evidence="2">
    <location>
        <begin position="337"/>
        <end position="352"/>
    </location>
</feature>
<keyword id="KW-0963">Cytoplasm</keyword>
<keyword id="KW-0269">Exonuclease</keyword>
<keyword id="KW-0378">Hydrolase</keyword>
<keyword id="KW-0540">Nuclease</keyword>
<keyword id="KW-1185">Reference proteome</keyword>
<reference key="1">
    <citation type="submission" date="2007-11" db="EMBL/GenBank/DDBJ databases">
        <authorList>
            <consortium name="The Salmonella enterica serovar Arizonae Genome Sequencing Project"/>
            <person name="McClelland M."/>
            <person name="Sanderson E.K."/>
            <person name="Porwollik S."/>
            <person name="Spieth J."/>
            <person name="Clifton W.S."/>
            <person name="Fulton R."/>
            <person name="Chunyan W."/>
            <person name="Wollam A."/>
            <person name="Shah N."/>
            <person name="Pepin K."/>
            <person name="Bhonagiri V."/>
            <person name="Nash W."/>
            <person name="Johnson M."/>
            <person name="Thiruvilangam P."/>
            <person name="Wilson R."/>
        </authorList>
    </citation>
    <scope>NUCLEOTIDE SEQUENCE [LARGE SCALE GENOMIC DNA]</scope>
    <source>
        <strain>ATCC BAA-731 / CDC346-86 / RSK2980</strain>
    </source>
</reference>
<proteinExistence type="inferred from homology"/>
<organism>
    <name type="scientific">Salmonella arizonae (strain ATCC BAA-731 / CDC346-86 / RSK2980)</name>
    <dbReference type="NCBI Taxonomy" id="41514"/>
    <lineage>
        <taxon>Bacteria</taxon>
        <taxon>Pseudomonadati</taxon>
        <taxon>Pseudomonadota</taxon>
        <taxon>Gammaproteobacteria</taxon>
        <taxon>Enterobacterales</taxon>
        <taxon>Enterobacteriaceae</taxon>
        <taxon>Salmonella</taxon>
    </lineage>
</organism>